<keyword id="KW-0113">Calvin cycle</keyword>
<keyword id="KW-0120">Carbon dioxide fixation</keyword>
<keyword id="KW-0456">Lyase</keyword>
<keyword id="KW-0460">Magnesium</keyword>
<keyword id="KW-0479">Metal-binding</keyword>
<keyword id="KW-0503">Monooxygenase</keyword>
<keyword id="KW-0560">Oxidoreductase</keyword>
<protein>
    <recommendedName>
        <fullName evidence="1">Ribulose bisphosphate carboxylase</fullName>
        <shortName evidence="1">RuBisCO</shortName>
        <ecNumber evidence="1">4.1.1.39</ecNumber>
    </recommendedName>
</protein>
<organism>
    <name type="scientific">Paramagnetospirillum magnetotacticum</name>
    <name type="common">Aquaspirillum magnetotacticum</name>
    <dbReference type="NCBI Taxonomy" id="188"/>
    <lineage>
        <taxon>Bacteria</taxon>
        <taxon>Pseudomonadati</taxon>
        <taxon>Pseudomonadota</taxon>
        <taxon>Alphaproteobacteria</taxon>
        <taxon>Rhodospirillales</taxon>
        <taxon>Magnetospirillaceae</taxon>
        <taxon>Paramagnetospirillum</taxon>
    </lineage>
</organism>
<name>RBL2_PARME</name>
<comment type="function">
    <text evidence="1">RuBisCO catalyzes two reactions: the carboxylation of D-ribulose 1,5-bisphosphate, the primary event in carbon dioxide fixation, as well as the oxidative fragmentation of the pentose substrate. Both reactions occur simultaneously and in competition at the same active site.</text>
</comment>
<comment type="catalytic activity">
    <reaction evidence="1">
        <text>2 (2R)-3-phosphoglycerate + 2 H(+) = D-ribulose 1,5-bisphosphate + CO2 + H2O</text>
        <dbReference type="Rhea" id="RHEA:23124"/>
        <dbReference type="ChEBI" id="CHEBI:15377"/>
        <dbReference type="ChEBI" id="CHEBI:15378"/>
        <dbReference type="ChEBI" id="CHEBI:16526"/>
        <dbReference type="ChEBI" id="CHEBI:57870"/>
        <dbReference type="ChEBI" id="CHEBI:58272"/>
        <dbReference type="EC" id="4.1.1.39"/>
    </reaction>
</comment>
<comment type="catalytic activity">
    <reaction evidence="1">
        <text>D-ribulose 1,5-bisphosphate + O2 = 2-phosphoglycolate + (2R)-3-phosphoglycerate + 2 H(+)</text>
        <dbReference type="Rhea" id="RHEA:36631"/>
        <dbReference type="ChEBI" id="CHEBI:15378"/>
        <dbReference type="ChEBI" id="CHEBI:15379"/>
        <dbReference type="ChEBI" id="CHEBI:57870"/>
        <dbReference type="ChEBI" id="CHEBI:58033"/>
        <dbReference type="ChEBI" id="CHEBI:58272"/>
    </reaction>
</comment>
<comment type="cofactor">
    <cofactor evidence="1">
        <name>Mg(2+)</name>
        <dbReference type="ChEBI" id="CHEBI:18420"/>
    </cofactor>
    <text evidence="1">Binds 1 Mg(2+) ion per subunit.</text>
</comment>
<comment type="subunit">
    <text evidence="1">Homodimer.</text>
</comment>
<comment type="miscellaneous">
    <text evidence="1">The basic functional RuBisCO is composed of a large chain homodimer in a 'head-to-tail' conformation. In contrast to form I RuBisCO, the form II RuBisCO are composed solely of large subunits.</text>
</comment>
<comment type="similarity">
    <text evidence="1">Belongs to the RuBisCO large chain family. Type II subfamily.</text>
</comment>
<gene>
    <name evidence="1" type="primary">cbbM</name>
</gene>
<dbReference type="EC" id="4.1.1.39" evidence="1"/>
<dbReference type="EMBL" id="AF442517">
    <property type="protein sequence ID" value="AAL76920.1"/>
    <property type="molecule type" value="Genomic_DNA"/>
</dbReference>
<dbReference type="SMR" id="Q8RTI2"/>
<dbReference type="GO" id="GO:0000287">
    <property type="term" value="F:magnesium ion binding"/>
    <property type="evidence" value="ECO:0007669"/>
    <property type="project" value="UniProtKB-UniRule"/>
</dbReference>
<dbReference type="GO" id="GO:0004497">
    <property type="term" value="F:monooxygenase activity"/>
    <property type="evidence" value="ECO:0007669"/>
    <property type="project" value="UniProtKB-KW"/>
</dbReference>
<dbReference type="GO" id="GO:0016984">
    <property type="term" value="F:ribulose-bisphosphate carboxylase activity"/>
    <property type="evidence" value="ECO:0007669"/>
    <property type="project" value="UniProtKB-UniRule"/>
</dbReference>
<dbReference type="GO" id="GO:0019253">
    <property type="term" value="P:reductive pentose-phosphate cycle"/>
    <property type="evidence" value="ECO:0007669"/>
    <property type="project" value="UniProtKB-KW"/>
</dbReference>
<dbReference type="CDD" id="cd08211">
    <property type="entry name" value="RuBisCO_large_II"/>
    <property type="match status" value="1"/>
</dbReference>
<dbReference type="Gene3D" id="3.20.20.110">
    <property type="entry name" value="Ribulose bisphosphate carboxylase, large subunit, C-terminal domain"/>
    <property type="match status" value="1"/>
</dbReference>
<dbReference type="Gene3D" id="3.30.70.150">
    <property type="entry name" value="RuBisCO large subunit, N-terminal domain"/>
    <property type="match status" value="1"/>
</dbReference>
<dbReference type="HAMAP" id="MF_01339">
    <property type="entry name" value="RuBisCO_L_type2"/>
    <property type="match status" value="1"/>
</dbReference>
<dbReference type="InterPro" id="IPR033966">
    <property type="entry name" value="RuBisCO"/>
</dbReference>
<dbReference type="InterPro" id="IPR020878">
    <property type="entry name" value="RuBisCo_large_chain_AS"/>
</dbReference>
<dbReference type="InterPro" id="IPR000685">
    <property type="entry name" value="RuBisCO_lsu_C"/>
</dbReference>
<dbReference type="InterPro" id="IPR036376">
    <property type="entry name" value="RuBisCO_lsu_C_sf"/>
</dbReference>
<dbReference type="InterPro" id="IPR017443">
    <property type="entry name" value="RuBisCO_lsu_fd_N"/>
</dbReference>
<dbReference type="InterPro" id="IPR036422">
    <property type="entry name" value="RuBisCO_lsu_N_sf"/>
</dbReference>
<dbReference type="InterPro" id="IPR020871">
    <property type="entry name" value="RuBisCO_lsuII"/>
</dbReference>
<dbReference type="NCBIfam" id="NF010002">
    <property type="entry name" value="PRK13475.1"/>
    <property type="match status" value="1"/>
</dbReference>
<dbReference type="PANTHER" id="PTHR42704">
    <property type="entry name" value="RIBULOSE BISPHOSPHATE CARBOXYLASE"/>
    <property type="match status" value="1"/>
</dbReference>
<dbReference type="PANTHER" id="PTHR42704:SF17">
    <property type="entry name" value="RIBULOSE BISPHOSPHATE CARBOXYLASE LARGE CHAIN"/>
    <property type="match status" value="1"/>
</dbReference>
<dbReference type="Pfam" id="PF00016">
    <property type="entry name" value="RuBisCO_large"/>
    <property type="match status" value="1"/>
</dbReference>
<dbReference type="Pfam" id="PF02788">
    <property type="entry name" value="RuBisCO_large_N"/>
    <property type="match status" value="1"/>
</dbReference>
<dbReference type="SFLD" id="SFLDS00014">
    <property type="entry name" value="RuBisCO"/>
    <property type="match status" value="1"/>
</dbReference>
<dbReference type="SFLD" id="SFLDG00301">
    <property type="entry name" value="RuBisCO-like_proteins"/>
    <property type="match status" value="1"/>
</dbReference>
<dbReference type="SUPFAM" id="SSF51649">
    <property type="entry name" value="RuBisCo, C-terminal domain"/>
    <property type="match status" value="1"/>
</dbReference>
<dbReference type="SUPFAM" id="SSF54966">
    <property type="entry name" value="RuBisCO, large subunit, small (N-terminal) domain"/>
    <property type="match status" value="1"/>
</dbReference>
<dbReference type="PROSITE" id="PS00157">
    <property type="entry name" value="RUBISCO_LARGE"/>
    <property type="match status" value="1"/>
</dbReference>
<sequence length="459" mass="50217">MDQSKRYVNLALSEADLIKGGRHVLCAYRMRPRPGHGYVETAAHFAAESSTGTNVEVCTTDDFTRGVDALVYEVDEAEGLMKIAYPVDLFDRNIIDGKAMIASFLTLTVGNNQGMSDVENAKMEDFYVPPEFLKLFDGPACNISHMWKVLGRPEVNGGMVVGTIIKPKLGLRPKPFADACHQFWLGGDFIKNDEPQGNQVFAPLKETMRLVADAMRRAQDETGVPKLLSANITADDPAEMIARGNFILETFGENASHVAFLVDGFVAGPTAVTTCRRNFPDTFLHYHRAGHGAITSRQSKRGYTVLVHMKMARLLGASGIHTGTMGYGKMEGAPDEKMVAYMLERQIAEGPYYRQDWGGMASCTPIISGGMSALRLPGFFDNLGHSNVIQTSGGGAFGHKDGAIAGALSLRQAHEAWLKKIDLVDYAQTHAELRGAFESFASDADRLYPGWRDRLRIAA</sequence>
<proteinExistence type="inferred from homology"/>
<feature type="chain" id="PRO_0000062663" description="Ribulose bisphosphate carboxylase">
    <location>
        <begin position="1"/>
        <end position="459"/>
    </location>
</feature>
<feature type="active site" description="Proton acceptor" evidence="1">
    <location>
        <position position="166"/>
    </location>
</feature>
<feature type="active site" description="Proton acceptor" evidence="1">
    <location>
        <position position="287"/>
    </location>
</feature>
<feature type="binding site" description="in homodimeric partner" evidence="1">
    <location>
        <position position="111"/>
    </location>
    <ligand>
        <name>substrate</name>
    </ligand>
</feature>
<feature type="binding site" evidence="1">
    <location>
        <position position="168"/>
    </location>
    <ligand>
        <name>substrate</name>
    </ligand>
</feature>
<feature type="binding site" description="via carbamate group" evidence="1">
    <location>
        <position position="191"/>
    </location>
    <ligand>
        <name>Mg(2+)</name>
        <dbReference type="ChEBI" id="CHEBI:18420"/>
    </ligand>
</feature>
<feature type="binding site" evidence="1">
    <location>
        <position position="193"/>
    </location>
    <ligand>
        <name>Mg(2+)</name>
        <dbReference type="ChEBI" id="CHEBI:18420"/>
    </ligand>
</feature>
<feature type="binding site" evidence="1">
    <location>
        <position position="194"/>
    </location>
    <ligand>
        <name>Mg(2+)</name>
        <dbReference type="ChEBI" id="CHEBI:18420"/>
    </ligand>
</feature>
<feature type="binding site" evidence="1">
    <location>
        <position position="288"/>
    </location>
    <ligand>
        <name>substrate</name>
    </ligand>
</feature>
<feature type="binding site" evidence="1">
    <location>
        <position position="321"/>
    </location>
    <ligand>
        <name>substrate</name>
    </ligand>
</feature>
<feature type="binding site" evidence="1">
    <location>
        <position position="368"/>
    </location>
    <ligand>
        <name>substrate</name>
    </ligand>
</feature>
<feature type="site" description="Transition state stabilizer" evidence="1">
    <location>
        <position position="329"/>
    </location>
</feature>
<feature type="modified residue" description="N6-carboxylysine" evidence="1">
    <location>
        <position position="191"/>
    </location>
</feature>
<reference key="1">
    <citation type="journal article" date="2004" name="Arch. Microbiol.">
        <title>Chemolithoautotrophy in the marine, magnetotactic bacterial strains MV-1 and MV-2.</title>
        <authorList>
            <person name="Bazylinski D.A."/>
            <person name="Dean A.J."/>
            <person name="Williams T.J."/>
            <person name="Long L.K."/>
            <person name="Middleton S.L."/>
            <person name="Dubbels B.L."/>
        </authorList>
    </citation>
    <scope>NUCLEOTIDE SEQUENCE [GENOMIC DNA]</scope>
    <source>
        <strain>ATCC 31632 / DSM 3856 / JCM 21281 / NBRC 15272 / NCIMB 12542 / MS-1</strain>
    </source>
</reference>
<evidence type="ECO:0000255" key="1">
    <source>
        <dbReference type="HAMAP-Rule" id="MF_01339"/>
    </source>
</evidence>
<accession>Q8RTI2</accession>